<keyword id="KW-0274">FAD</keyword>
<keyword id="KW-0285">Flavoprotein</keyword>
<keyword id="KW-0521">NADP</keyword>
<keyword id="KW-0560">Oxidoreductase</keyword>
<comment type="catalytic activity">
    <reaction evidence="1">
        <text>2 reduced [2Fe-2S]-[ferredoxin] + NADP(+) + H(+) = 2 oxidized [2Fe-2S]-[ferredoxin] + NADPH</text>
        <dbReference type="Rhea" id="RHEA:20125"/>
        <dbReference type="Rhea" id="RHEA-COMP:10000"/>
        <dbReference type="Rhea" id="RHEA-COMP:10001"/>
        <dbReference type="ChEBI" id="CHEBI:15378"/>
        <dbReference type="ChEBI" id="CHEBI:33737"/>
        <dbReference type="ChEBI" id="CHEBI:33738"/>
        <dbReference type="ChEBI" id="CHEBI:57783"/>
        <dbReference type="ChEBI" id="CHEBI:58349"/>
        <dbReference type="EC" id="1.18.1.2"/>
    </reaction>
</comment>
<comment type="cofactor">
    <cofactor evidence="1">
        <name>FAD</name>
        <dbReference type="ChEBI" id="CHEBI:57692"/>
    </cofactor>
    <text evidence="1">Binds 1 FAD per subunit.</text>
</comment>
<comment type="subunit">
    <text evidence="1">Homodimer.</text>
</comment>
<comment type="similarity">
    <text evidence="1">Belongs to the ferredoxin--NADP reductase type 2 family.</text>
</comment>
<comment type="sequence caution" evidence="2">
    <conflict type="erroneous initiation">
        <sequence resource="EMBL-CDS" id="ABM33624"/>
    </conflict>
</comment>
<evidence type="ECO:0000255" key="1">
    <source>
        <dbReference type="HAMAP-Rule" id="MF_01685"/>
    </source>
</evidence>
<evidence type="ECO:0000305" key="2"/>
<accession>A1TRN6</accession>
<reference key="1">
    <citation type="submission" date="2006-12" db="EMBL/GenBank/DDBJ databases">
        <title>Complete sequence of Acidovorax avenae subsp. citrulli AAC00-1.</title>
        <authorList>
            <person name="Copeland A."/>
            <person name="Lucas S."/>
            <person name="Lapidus A."/>
            <person name="Barry K."/>
            <person name="Detter J.C."/>
            <person name="Glavina del Rio T."/>
            <person name="Dalin E."/>
            <person name="Tice H."/>
            <person name="Pitluck S."/>
            <person name="Kiss H."/>
            <person name="Brettin T."/>
            <person name="Bruce D."/>
            <person name="Han C."/>
            <person name="Tapia R."/>
            <person name="Gilna P."/>
            <person name="Schmutz J."/>
            <person name="Larimer F."/>
            <person name="Land M."/>
            <person name="Hauser L."/>
            <person name="Kyrpides N."/>
            <person name="Kim E."/>
            <person name="Stahl D."/>
            <person name="Richardson P."/>
        </authorList>
    </citation>
    <scope>NUCLEOTIDE SEQUENCE [LARGE SCALE GENOMIC DNA]</scope>
    <source>
        <strain>AAC00-1</strain>
    </source>
</reference>
<sequence>MENARLIEADAVVIGAGPVGLFQVFQLGLQGIAAHVVDALPHVGGQCAELYADKPIYDIPGVPVCTGRELVALLNRQIAPFSPQLHLSQRVETLQPAPDGGFLFATDAGAALHARTVFIAAGVGAFVPRTLKIDGIERFHGTQVFHHEEPAPTRGRQVVVLGGEDTAVARAIACAEPGPEAAASVTLVHRRDAFQAAPQDLARLQALRDSGRIRVLAAQVTGIEAAAQAGTPEPGRLTGVRLLASDGTEQGLPLDTLLLCLGVSPRLGPVADWGLALERKQVKVDTATFSAGVPGLYAVGDINTYPGKRKLILCGFHEATLAAFAAAEHLAGSPVALQYTTTSTRLKERLGVAGAGTP</sequence>
<proteinExistence type="inferred from homology"/>
<feature type="chain" id="PRO_0000364780" description="Ferredoxin--NADP reductase">
    <location>
        <begin position="1"/>
        <end position="358"/>
    </location>
</feature>
<feature type="binding site" evidence="1">
    <location>
        <position position="38"/>
    </location>
    <ligand>
        <name>FAD</name>
        <dbReference type="ChEBI" id="CHEBI:57692"/>
    </ligand>
</feature>
<feature type="binding site" evidence="1">
    <location>
        <position position="46"/>
    </location>
    <ligand>
        <name>FAD</name>
        <dbReference type="ChEBI" id="CHEBI:57692"/>
    </ligand>
</feature>
<feature type="binding site" evidence="1">
    <location>
        <position position="51"/>
    </location>
    <ligand>
        <name>FAD</name>
        <dbReference type="ChEBI" id="CHEBI:57692"/>
    </ligand>
</feature>
<feature type="binding site" evidence="1">
    <location>
        <position position="91"/>
    </location>
    <ligand>
        <name>FAD</name>
        <dbReference type="ChEBI" id="CHEBI:57692"/>
    </ligand>
</feature>
<feature type="binding site" evidence="1">
    <location>
        <position position="126"/>
    </location>
    <ligand>
        <name>FAD</name>
        <dbReference type="ChEBI" id="CHEBI:57692"/>
    </ligand>
</feature>
<feature type="binding site" evidence="1">
    <location>
        <position position="301"/>
    </location>
    <ligand>
        <name>FAD</name>
        <dbReference type="ChEBI" id="CHEBI:57692"/>
    </ligand>
</feature>
<feature type="binding site" evidence="1">
    <location>
        <position position="341"/>
    </location>
    <ligand>
        <name>FAD</name>
        <dbReference type="ChEBI" id="CHEBI:57692"/>
    </ligand>
</feature>
<gene>
    <name type="ordered locus">Aave_3058</name>
</gene>
<protein>
    <recommendedName>
        <fullName evidence="1">Ferredoxin--NADP reductase</fullName>
        <shortName evidence="1">FNR</shortName>
        <shortName evidence="1">Fd-NADP(+) reductase</shortName>
        <ecNumber evidence="1">1.18.1.2</ecNumber>
    </recommendedName>
</protein>
<dbReference type="EC" id="1.18.1.2" evidence="1"/>
<dbReference type="EMBL" id="CP000512">
    <property type="protein sequence ID" value="ABM33624.1"/>
    <property type="status" value="ALT_INIT"/>
    <property type="molecule type" value="Genomic_DNA"/>
</dbReference>
<dbReference type="RefSeq" id="WP_041827504.1">
    <property type="nucleotide sequence ID" value="NC_008752.1"/>
</dbReference>
<dbReference type="SMR" id="A1TRN6"/>
<dbReference type="STRING" id="397945.Aave_3058"/>
<dbReference type="KEGG" id="aav:Aave_3058"/>
<dbReference type="eggNOG" id="COG0492">
    <property type="taxonomic scope" value="Bacteria"/>
</dbReference>
<dbReference type="HOGENOM" id="CLU_031864_5_5_4"/>
<dbReference type="OrthoDB" id="9806179at2"/>
<dbReference type="Proteomes" id="UP000002596">
    <property type="component" value="Chromosome"/>
</dbReference>
<dbReference type="GO" id="GO:0004324">
    <property type="term" value="F:ferredoxin-NADP+ reductase activity"/>
    <property type="evidence" value="ECO:0007669"/>
    <property type="project" value="UniProtKB-UniRule"/>
</dbReference>
<dbReference type="GO" id="GO:0050660">
    <property type="term" value="F:flavin adenine dinucleotide binding"/>
    <property type="evidence" value="ECO:0007669"/>
    <property type="project" value="UniProtKB-UniRule"/>
</dbReference>
<dbReference type="GO" id="GO:0050661">
    <property type="term" value="F:NADP binding"/>
    <property type="evidence" value="ECO:0007669"/>
    <property type="project" value="UniProtKB-UniRule"/>
</dbReference>
<dbReference type="Gene3D" id="3.50.50.60">
    <property type="entry name" value="FAD/NAD(P)-binding domain"/>
    <property type="match status" value="2"/>
</dbReference>
<dbReference type="HAMAP" id="MF_01685">
    <property type="entry name" value="FENR2"/>
    <property type="match status" value="1"/>
</dbReference>
<dbReference type="InterPro" id="IPR036188">
    <property type="entry name" value="FAD/NAD-bd_sf"/>
</dbReference>
<dbReference type="InterPro" id="IPR023753">
    <property type="entry name" value="FAD/NAD-binding_dom"/>
</dbReference>
<dbReference type="InterPro" id="IPR022890">
    <property type="entry name" value="Fd--NADP_Rdtase_type_2"/>
</dbReference>
<dbReference type="InterPro" id="IPR050097">
    <property type="entry name" value="Ferredoxin-NADP_redctase_2"/>
</dbReference>
<dbReference type="PANTHER" id="PTHR48105">
    <property type="entry name" value="THIOREDOXIN REDUCTASE 1-RELATED-RELATED"/>
    <property type="match status" value="1"/>
</dbReference>
<dbReference type="Pfam" id="PF07992">
    <property type="entry name" value="Pyr_redox_2"/>
    <property type="match status" value="1"/>
</dbReference>
<dbReference type="PRINTS" id="PR00368">
    <property type="entry name" value="FADPNR"/>
</dbReference>
<dbReference type="PRINTS" id="PR00469">
    <property type="entry name" value="PNDRDTASEII"/>
</dbReference>
<dbReference type="SUPFAM" id="SSF51905">
    <property type="entry name" value="FAD/NAD(P)-binding domain"/>
    <property type="match status" value="2"/>
</dbReference>
<name>FENR_PARC0</name>
<organism>
    <name type="scientific">Paracidovorax citrulli (strain AAC00-1)</name>
    <name type="common">Acidovorax citrulli</name>
    <dbReference type="NCBI Taxonomy" id="397945"/>
    <lineage>
        <taxon>Bacteria</taxon>
        <taxon>Pseudomonadati</taxon>
        <taxon>Pseudomonadota</taxon>
        <taxon>Betaproteobacteria</taxon>
        <taxon>Burkholderiales</taxon>
        <taxon>Comamonadaceae</taxon>
        <taxon>Paracidovorax</taxon>
    </lineage>
</organism>